<protein>
    <recommendedName>
        <fullName>Endo-1,4-beta-xylanase Z</fullName>
        <shortName>Xylanase Z</shortName>
        <ecNumber>3.2.1.8</ecNumber>
    </recommendedName>
    <alternativeName>
        <fullName>1,4-beta-D-xylan xylanohydrolase Z</fullName>
    </alternativeName>
</protein>
<sequence length="837" mass="92263">MSRKLFSVLLVGLMLMTSLLVTISSTSAASLPTMPPSGYDQVRNGVPRGQVVNISYFSTATNSTRPARVYLPPGYSKDKKYSVLYLLHGIGGSENDWFEGGGRANVIADNLIAEGKIKPLIIVTPNTNAAGPGIADGYENFTKDLLNSLIPYIESNYSVYTDREHRAIAGLSMGGGQSFNIGLTNLDKFAYIGPISAAPNTYPNERLFPDGGKAAREKLKLLFIACGTNDSLIGFGQRVHEYCVANNINHVYWLIQGGGHDFNVWKPGLWNFLQMADEAGLTRDGNTPVPTPSPKPANTRIEAEDYDGINSSSIEIIGVPPEGGRGIGYITSGDYLVYKSIDFGNGATSFKAKVANANTSNIELRLNGPNGTLIGTLSVKSTGDWNTYEEQTCSISKVTGINDLYLVFKGPVNIDWFTFGVESSSTGLGDLNGDGNINSSDLQALKRHLLGISPLTGEALLRADVNRSGKVDSTDYSVLKRYILRIITEFPGQGDVQTPNPSVTPTQTPIPTISGNALRDYAEARGIKIGTCVNYPFYNNSDPTYNSILQREFSMVVCENEMKFDALQPRQNVFDFSKGDQLLAFAERNGMQMRGHTLIWHNQNPSWLTNGNWNRDSLLAVMKNHITTVMTHYKGKIVEWDVANECMDDSGNGLRSSIWRNVIGQDYLDYAFRYAREADPDALLFYNDYNIEDLGPKSNAVFNMIKSMKERGVPIDGVGFQCHFINGMSPEYLASIDQNIKRYAEIGVIVSFTEIDIRIPQSENPATAFQVQANNYKELMKICLANPNCNTFVMWGFTDKYTWIPGTFPGYGNPLIYDSNYNPKPAYNAIKEALMGY</sequence>
<comment type="catalytic activity">
    <reaction>
        <text>Endohydrolysis of (1-&gt;4)-beta-D-xylosidic linkages in xylans.</text>
        <dbReference type="EC" id="3.2.1.8"/>
    </reaction>
</comment>
<comment type="similarity">
    <text evidence="6">Belongs to the glycosyl hydrolase 10 (cellulase F) family.</text>
</comment>
<keyword id="KW-0002">3D-structure</keyword>
<keyword id="KW-0119">Carbohydrate metabolism</keyword>
<keyword id="KW-1015">Disulfide bond</keyword>
<keyword id="KW-0326">Glycosidase</keyword>
<keyword id="KW-0378">Hydrolase</keyword>
<keyword id="KW-0624">Polysaccharide degradation</keyword>
<keyword id="KW-1185">Reference proteome</keyword>
<keyword id="KW-0732">Signal</keyword>
<keyword id="KW-0858">Xylan degradation</keyword>
<dbReference type="EC" id="3.2.1.8"/>
<dbReference type="EMBL" id="M22624">
    <property type="protein sequence ID" value="AAA23286.1"/>
    <property type="molecule type" value="Genomic_DNA"/>
</dbReference>
<dbReference type="EMBL" id="CP000568">
    <property type="protein sequence ID" value="ABN53181.1"/>
    <property type="molecule type" value="Genomic_DNA"/>
</dbReference>
<dbReference type="PIR" id="A31842">
    <property type="entry name" value="A31842"/>
</dbReference>
<dbReference type="RefSeq" id="WP_003513959.1">
    <property type="nucleotide sequence ID" value="NC_009012.1"/>
</dbReference>
<dbReference type="PDB" id="1JJF">
    <property type="method" value="X-ray"/>
    <property type="resolution" value="1.75 A"/>
    <property type="chains" value="A=20-287"/>
</dbReference>
<dbReference type="PDB" id="1JT2">
    <property type="method" value="X-ray"/>
    <property type="resolution" value="1.80 A"/>
    <property type="chains" value="A=20-287"/>
</dbReference>
<dbReference type="PDB" id="1XYZ">
    <property type="method" value="X-ray"/>
    <property type="resolution" value="1.40 A"/>
    <property type="chains" value="A/B=491-837"/>
</dbReference>
<dbReference type="PDBsum" id="1JJF"/>
<dbReference type="PDBsum" id="1JT2"/>
<dbReference type="PDBsum" id="1XYZ"/>
<dbReference type="SMR" id="P10478"/>
<dbReference type="IntAct" id="P10478">
    <property type="interactions" value="1"/>
</dbReference>
<dbReference type="STRING" id="203119.Cthe_1963"/>
<dbReference type="DrugBank" id="DB07767">
    <property type="generic name" value="Ferulic acid"/>
</dbReference>
<dbReference type="CAZy" id="CBM6">
    <property type="family name" value="Carbohydrate-Binding Module Family 6"/>
</dbReference>
<dbReference type="CAZy" id="GH10">
    <property type="family name" value="Glycoside Hydrolase Family 10"/>
</dbReference>
<dbReference type="ESTHER" id="clotm-xynz">
    <property type="family name" value="A85-Feruloyl-Esterase"/>
</dbReference>
<dbReference type="GeneID" id="35804788"/>
<dbReference type="KEGG" id="cth:Cthe_1963"/>
<dbReference type="eggNOG" id="COG2382">
    <property type="taxonomic scope" value="Bacteria"/>
</dbReference>
<dbReference type="eggNOG" id="COG3507">
    <property type="taxonomic scope" value="Bacteria"/>
</dbReference>
<dbReference type="eggNOG" id="COG3693">
    <property type="taxonomic scope" value="Bacteria"/>
</dbReference>
<dbReference type="HOGENOM" id="CLU_339412_0_0_9"/>
<dbReference type="OrthoDB" id="9777383at2"/>
<dbReference type="BioCyc" id="MetaCyc:MONOMER-16453"/>
<dbReference type="BRENDA" id="3.1.1.73">
    <property type="organism ID" value="1530"/>
</dbReference>
<dbReference type="BRENDA" id="3.2.1.73">
    <property type="organism ID" value="1530"/>
</dbReference>
<dbReference type="BRENDA" id="3.2.1.8">
    <property type="organism ID" value="1530"/>
</dbReference>
<dbReference type="EvolutionaryTrace" id="P10478"/>
<dbReference type="Proteomes" id="UP000002145">
    <property type="component" value="Chromosome"/>
</dbReference>
<dbReference type="GO" id="GO:0030246">
    <property type="term" value="F:carbohydrate binding"/>
    <property type="evidence" value="ECO:0007669"/>
    <property type="project" value="InterPro"/>
</dbReference>
<dbReference type="GO" id="GO:0031176">
    <property type="term" value="F:endo-1,4-beta-xylanase activity"/>
    <property type="evidence" value="ECO:0000314"/>
    <property type="project" value="MENGO"/>
</dbReference>
<dbReference type="GO" id="GO:0033905">
    <property type="term" value="F:xylan endo-1,3-beta-xylosidase activity"/>
    <property type="evidence" value="ECO:0000314"/>
    <property type="project" value="MENGO"/>
</dbReference>
<dbReference type="GO" id="GO:0045493">
    <property type="term" value="P:xylan catabolic process"/>
    <property type="evidence" value="ECO:0007669"/>
    <property type="project" value="UniProtKB-KW"/>
</dbReference>
<dbReference type="CDD" id="cd04084">
    <property type="entry name" value="CBM6_xylanase-like"/>
    <property type="match status" value="1"/>
</dbReference>
<dbReference type="CDD" id="cd14256">
    <property type="entry name" value="Dockerin_I"/>
    <property type="match status" value="1"/>
</dbReference>
<dbReference type="FunFam" id="3.20.20.80:FF:000258">
    <property type="entry name" value="Endo-1,4-beta-xylanase A"/>
    <property type="match status" value="1"/>
</dbReference>
<dbReference type="FunFam" id="2.60.120.260:FF:000373">
    <property type="entry name" value="Endo-1,4-beta-xylanase Z"/>
    <property type="match status" value="1"/>
</dbReference>
<dbReference type="FunFam" id="3.40.50.1820:FF:001075">
    <property type="entry name" value="Endo-1,4-beta-xylanase Z"/>
    <property type="match status" value="1"/>
</dbReference>
<dbReference type="Gene3D" id="3.40.50.1820">
    <property type="entry name" value="alpha/beta hydrolase"/>
    <property type="match status" value="1"/>
</dbReference>
<dbReference type="Gene3D" id="1.10.1330.10">
    <property type="entry name" value="Dockerin domain"/>
    <property type="match status" value="1"/>
</dbReference>
<dbReference type="Gene3D" id="2.60.120.260">
    <property type="entry name" value="Galactose-binding domain-like"/>
    <property type="match status" value="1"/>
</dbReference>
<dbReference type="Gene3D" id="3.20.20.80">
    <property type="entry name" value="Glycosidases"/>
    <property type="match status" value="1"/>
</dbReference>
<dbReference type="InterPro" id="IPR029058">
    <property type="entry name" value="AB_hydrolase_fold"/>
</dbReference>
<dbReference type="InterPro" id="IPR005084">
    <property type="entry name" value="CBM6"/>
</dbReference>
<dbReference type="InterPro" id="IPR006584">
    <property type="entry name" value="Cellulose-bd_IV"/>
</dbReference>
<dbReference type="InterPro" id="IPR002105">
    <property type="entry name" value="Dockerin_1_rpt"/>
</dbReference>
<dbReference type="InterPro" id="IPR016134">
    <property type="entry name" value="Dockerin_dom"/>
</dbReference>
<dbReference type="InterPro" id="IPR036439">
    <property type="entry name" value="Dockerin_dom_sf"/>
</dbReference>
<dbReference type="InterPro" id="IPR018247">
    <property type="entry name" value="EF_Hand_1_Ca_BS"/>
</dbReference>
<dbReference type="InterPro" id="IPR000801">
    <property type="entry name" value="Esterase-like"/>
</dbReference>
<dbReference type="InterPro" id="IPR008979">
    <property type="entry name" value="Galactose-bd-like_sf"/>
</dbReference>
<dbReference type="InterPro" id="IPR044846">
    <property type="entry name" value="GH10"/>
</dbReference>
<dbReference type="InterPro" id="IPR031158">
    <property type="entry name" value="GH10_AS"/>
</dbReference>
<dbReference type="InterPro" id="IPR001000">
    <property type="entry name" value="GH10_dom"/>
</dbReference>
<dbReference type="InterPro" id="IPR017853">
    <property type="entry name" value="Glycoside_hydrolase_SF"/>
</dbReference>
<dbReference type="PANTHER" id="PTHR31490:SF88">
    <property type="entry name" value="BETA-XYLANASE"/>
    <property type="match status" value="1"/>
</dbReference>
<dbReference type="PANTHER" id="PTHR31490">
    <property type="entry name" value="GLYCOSYL HYDROLASE"/>
    <property type="match status" value="1"/>
</dbReference>
<dbReference type="Pfam" id="PF03422">
    <property type="entry name" value="CBM_6"/>
    <property type="match status" value="1"/>
</dbReference>
<dbReference type="Pfam" id="PF00404">
    <property type="entry name" value="Dockerin_1"/>
    <property type="match status" value="1"/>
</dbReference>
<dbReference type="Pfam" id="PF00756">
    <property type="entry name" value="Esterase"/>
    <property type="match status" value="1"/>
</dbReference>
<dbReference type="Pfam" id="PF00331">
    <property type="entry name" value="Glyco_hydro_10"/>
    <property type="match status" value="1"/>
</dbReference>
<dbReference type="PRINTS" id="PR00134">
    <property type="entry name" value="GLHYDRLASE10"/>
</dbReference>
<dbReference type="SMART" id="SM00606">
    <property type="entry name" value="CBD_IV"/>
    <property type="match status" value="1"/>
</dbReference>
<dbReference type="SMART" id="SM00633">
    <property type="entry name" value="Glyco_10"/>
    <property type="match status" value="1"/>
</dbReference>
<dbReference type="SUPFAM" id="SSF51445">
    <property type="entry name" value="(Trans)glycosidases"/>
    <property type="match status" value="1"/>
</dbReference>
<dbReference type="SUPFAM" id="SSF53474">
    <property type="entry name" value="alpha/beta-Hydrolases"/>
    <property type="match status" value="1"/>
</dbReference>
<dbReference type="SUPFAM" id="SSF49785">
    <property type="entry name" value="Galactose-binding domain-like"/>
    <property type="match status" value="1"/>
</dbReference>
<dbReference type="SUPFAM" id="SSF63446">
    <property type="entry name" value="Type I dockerin domain"/>
    <property type="match status" value="1"/>
</dbReference>
<dbReference type="PROSITE" id="PS51175">
    <property type="entry name" value="CBM6"/>
    <property type="match status" value="1"/>
</dbReference>
<dbReference type="PROSITE" id="PS00448">
    <property type="entry name" value="CLOS_CELLULOSOME_RPT"/>
    <property type="match status" value="2"/>
</dbReference>
<dbReference type="PROSITE" id="PS51766">
    <property type="entry name" value="DOCKERIN"/>
    <property type="match status" value="1"/>
</dbReference>
<dbReference type="PROSITE" id="PS00018">
    <property type="entry name" value="EF_HAND_1"/>
    <property type="match status" value="2"/>
</dbReference>
<dbReference type="PROSITE" id="PS00591">
    <property type="entry name" value="GH10_1"/>
    <property type="match status" value="1"/>
</dbReference>
<dbReference type="PROSITE" id="PS51760">
    <property type="entry name" value="GH10_2"/>
    <property type="match status" value="1"/>
</dbReference>
<organism>
    <name type="scientific">Acetivibrio thermocellus (strain ATCC 27405 / DSM 1237 / JCM 9322 / NBRC 103400 / NCIMB 10682 / NRRL B-4536 / VPI 7372)</name>
    <name type="common">Clostridium thermocellum</name>
    <dbReference type="NCBI Taxonomy" id="203119"/>
    <lineage>
        <taxon>Bacteria</taxon>
        <taxon>Bacillati</taxon>
        <taxon>Bacillota</taxon>
        <taxon>Clostridia</taxon>
        <taxon>Eubacteriales</taxon>
        <taxon>Oscillospiraceae</taxon>
        <taxon>Acetivibrio</taxon>
    </lineage>
</organism>
<accession>P10478</accession>
<accession>A3DGV2</accession>
<name>XYNZ_ACET2</name>
<gene>
    <name type="primary">xynZ</name>
    <name type="ordered locus">Cthe_1963</name>
</gene>
<proteinExistence type="evidence at protein level"/>
<feature type="signal peptide" evidence="2">
    <location>
        <begin position="1"/>
        <end position="28"/>
    </location>
</feature>
<feature type="chain" id="PRO_0000007973" description="Endo-1,4-beta-xylanase Z">
    <location>
        <begin position="29"/>
        <end position="837"/>
    </location>
</feature>
<feature type="domain" description="CBM6" evidence="3">
    <location>
        <begin position="299"/>
        <end position="420"/>
    </location>
</feature>
<feature type="domain" description="Dockerin" evidence="5">
    <location>
        <begin position="424"/>
        <end position="492"/>
    </location>
</feature>
<feature type="domain" description="GH10" evidence="4">
    <location>
        <begin position="512"/>
        <end position="833"/>
    </location>
</feature>
<feature type="active site" description="Proton donor">
    <location>
        <position position="645"/>
    </location>
</feature>
<feature type="active site" description="Nucleophile">
    <location>
        <position position="754"/>
    </location>
</feature>
<feature type="disulfide bond" evidence="1">
    <location>
        <begin position="783"/>
        <end position="789"/>
    </location>
</feature>
<feature type="turn" evidence="7">
    <location>
        <begin position="37"/>
        <end position="40"/>
    </location>
</feature>
<feature type="strand" evidence="7">
    <location>
        <begin position="50"/>
        <end position="58"/>
    </location>
</feature>
<feature type="turn" evidence="7">
    <location>
        <begin position="59"/>
        <end position="62"/>
    </location>
</feature>
<feature type="strand" evidence="7">
    <location>
        <begin position="63"/>
        <end position="71"/>
    </location>
</feature>
<feature type="strand" evidence="7">
    <location>
        <begin position="83"/>
        <end position="87"/>
    </location>
</feature>
<feature type="turn" evidence="7">
    <location>
        <begin position="94"/>
        <end position="102"/>
    </location>
</feature>
<feature type="helix" evidence="7">
    <location>
        <begin position="104"/>
        <end position="113"/>
    </location>
</feature>
<feature type="strand" evidence="7">
    <location>
        <begin position="121"/>
        <end position="125"/>
    </location>
</feature>
<feature type="helix" evidence="7">
    <location>
        <begin position="137"/>
        <end position="147"/>
    </location>
</feature>
<feature type="helix" evidence="7">
    <location>
        <begin position="149"/>
        <end position="156"/>
    </location>
</feature>
<feature type="helix" evidence="7">
    <location>
        <begin position="163"/>
        <end position="165"/>
    </location>
</feature>
<feature type="strand" evidence="7">
    <location>
        <begin position="166"/>
        <end position="171"/>
    </location>
</feature>
<feature type="helix" evidence="7">
    <location>
        <begin position="173"/>
        <end position="183"/>
    </location>
</feature>
<feature type="turn" evidence="7">
    <location>
        <begin position="186"/>
        <end position="188"/>
    </location>
</feature>
<feature type="strand" evidence="7">
    <location>
        <begin position="190"/>
        <end position="196"/>
    </location>
</feature>
<feature type="helix" evidence="7">
    <location>
        <begin position="204"/>
        <end position="207"/>
    </location>
</feature>
<feature type="turn" evidence="7">
    <location>
        <begin position="209"/>
        <end position="212"/>
    </location>
</feature>
<feature type="helix" evidence="7">
    <location>
        <begin position="213"/>
        <end position="218"/>
    </location>
</feature>
<feature type="strand" evidence="7">
    <location>
        <begin position="220"/>
        <end position="227"/>
    </location>
</feature>
<feature type="helix" evidence="7">
    <location>
        <begin position="233"/>
        <end position="245"/>
    </location>
</feature>
<feature type="strand" evidence="7">
    <location>
        <begin position="251"/>
        <end position="255"/>
    </location>
</feature>
<feature type="helix" evidence="7">
    <location>
        <begin position="262"/>
        <end position="279"/>
    </location>
</feature>
<feature type="turn" evidence="7">
    <location>
        <begin position="280"/>
        <end position="282"/>
    </location>
</feature>
<feature type="helix" evidence="8">
    <location>
        <begin position="518"/>
        <end position="524"/>
    </location>
</feature>
<feature type="strand" evidence="8">
    <location>
        <begin position="528"/>
        <end position="533"/>
    </location>
</feature>
<feature type="helix" evidence="8">
    <location>
        <begin position="536"/>
        <end position="539"/>
    </location>
</feature>
<feature type="helix" evidence="8">
    <location>
        <begin position="543"/>
        <end position="552"/>
    </location>
</feature>
<feature type="strand" evidence="8">
    <location>
        <begin position="554"/>
        <end position="560"/>
    </location>
</feature>
<feature type="helix" evidence="8">
    <location>
        <begin position="564"/>
        <end position="567"/>
    </location>
</feature>
<feature type="helix" evidence="8">
    <location>
        <begin position="577"/>
        <end position="588"/>
    </location>
</feature>
<feature type="strand" evidence="8">
    <location>
        <begin position="592"/>
        <end position="599"/>
    </location>
</feature>
<feature type="strand" evidence="8">
    <location>
        <begin position="601"/>
        <end position="603"/>
    </location>
</feature>
<feature type="helix" evidence="8">
    <location>
        <begin position="606"/>
        <end position="609"/>
    </location>
</feature>
<feature type="helix" evidence="8">
    <location>
        <begin position="615"/>
        <end position="632"/>
    </location>
</feature>
<feature type="turn" evidence="8">
    <location>
        <begin position="633"/>
        <end position="636"/>
    </location>
</feature>
<feature type="strand" evidence="8">
    <location>
        <begin position="638"/>
        <end position="645"/>
    </location>
</feature>
<feature type="strand" evidence="8">
    <location>
        <begin position="651"/>
        <end position="654"/>
    </location>
</feature>
<feature type="helix" evidence="8">
    <location>
        <begin position="658"/>
        <end position="663"/>
    </location>
</feature>
<feature type="helix" evidence="8">
    <location>
        <begin position="667"/>
        <end position="678"/>
    </location>
</feature>
<feature type="strand" evidence="8">
    <location>
        <begin position="682"/>
        <end position="690"/>
    </location>
</feature>
<feature type="strand" evidence="8">
    <location>
        <begin position="692"/>
        <end position="695"/>
    </location>
</feature>
<feature type="helix" evidence="8">
    <location>
        <begin position="696"/>
        <end position="710"/>
    </location>
</feature>
<feature type="strand" evidence="8">
    <location>
        <begin position="717"/>
        <end position="720"/>
    </location>
</feature>
<feature type="strand" evidence="8">
    <location>
        <begin position="723"/>
        <end position="727"/>
    </location>
</feature>
<feature type="helix" evidence="8">
    <location>
        <begin position="730"/>
        <end position="745"/>
    </location>
</feature>
<feature type="strand" evidence="8">
    <location>
        <begin position="749"/>
        <end position="760"/>
    </location>
</feature>
<feature type="helix" evidence="8">
    <location>
        <begin position="765"/>
        <end position="785"/>
    </location>
</feature>
<feature type="strand" evidence="8">
    <location>
        <begin position="789"/>
        <end position="795"/>
    </location>
</feature>
<feature type="helix" evidence="8">
    <location>
        <begin position="804"/>
        <end position="807"/>
    </location>
</feature>
<feature type="strand" evidence="8">
    <location>
        <begin position="815"/>
        <end position="817"/>
    </location>
</feature>
<feature type="helix" evidence="8">
    <location>
        <begin position="825"/>
        <end position="834"/>
    </location>
</feature>
<evidence type="ECO:0000250" key="1"/>
<evidence type="ECO:0000255" key="2"/>
<evidence type="ECO:0000255" key="3">
    <source>
        <dbReference type="PROSITE-ProRule" id="PRU00523"/>
    </source>
</evidence>
<evidence type="ECO:0000255" key="4">
    <source>
        <dbReference type="PROSITE-ProRule" id="PRU01096"/>
    </source>
</evidence>
<evidence type="ECO:0000255" key="5">
    <source>
        <dbReference type="PROSITE-ProRule" id="PRU01102"/>
    </source>
</evidence>
<evidence type="ECO:0000305" key="6"/>
<evidence type="ECO:0007829" key="7">
    <source>
        <dbReference type="PDB" id="1JJF"/>
    </source>
</evidence>
<evidence type="ECO:0007829" key="8">
    <source>
        <dbReference type="PDB" id="1XYZ"/>
    </source>
</evidence>
<reference key="1">
    <citation type="journal article" date="1988" name="J. Bacteriol.">
        <title>Nucleotide sequence and deletion analysis of the xylanase gene (xynZ) of Clostridium thermocellum.</title>
        <authorList>
            <person name="Grepinet O."/>
            <person name="Chebrou M.-C."/>
            <person name="Beguin P."/>
        </authorList>
    </citation>
    <scope>NUCLEOTIDE SEQUENCE [GENOMIC DNA]</scope>
</reference>
<reference key="2">
    <citation type="submission" date="2007-02" db="EMBL/GenBank/DDBJ databases">
        <title>Complete sequence of Clostridium thermocellum ATCC 27405.</title>
        <authorList>
            <consortium name="US DOE Joint Genome Institute"/>
            <person name="Copeland A."/>
            <person name="Lucas S."/>
            <person name="Lapidus A."/>
            <person name="Barry K."/>
            <person name="Detter J.C."/>
            <person name="Glavina del Rio T."/>
            <person name="Hammon N."/>
            <person name="Israni S."/>
            <person name="Dalin E."/>
            <person name="Tice H."/>
            <person name="Pitluck S."/>
            <person name="Chertkov O."/>
            <person name="Brettin T."/>
            <person name="Bruce D."/>
            <person name="Han C."/>
            <person name="Tapia R."/>
            <person name="Gilna P."/>
            <person name="Schmutz J."/>
            <person name="Larimer F."/>
            <person name="Land M."/>
            <person name="Hauser L."/>
            <person name="Kyrpides N."/>
            <person name="Mikhailova N."/>
            <person name="Wu J.H.D."/>
            <person name="Newcomb M."/>
            <person name="Richardson P."/>
        </authorList>
    </citation>
    <scope>NUCLEOTIDE SEQUENCE [LARGE SCALE GENOMIC DNA]</scope>
    <source>
        <strain>ATCC 27405 / DSM 1237 / JCM 9322 / NBRC 103400 / NCIMB 10682 / NRRL B-4536 / VPI 7372</strain>
    </source>
</reference>
<reference key="3">
    <citation type="journal article" date="1995" name="Nat. Struct. Biol.">
        <title>A common protein fold and similar active site in two distinct families of beta-glycanases.</title>
        <authorList>
            <person name="Dominguez R."/>
            <person name="Souchon H."/>
            <person name="Spinelli S."/>
            <person name="Dauter Z."/>
            <person name="Wilson K.S."/>
            <person name="Chauvaux S."/>
            <person name="Beguin P."/>
            <person name="Alzari P.M."/>
        </authorList>
    </citation>
    <scope>X-RAY CRYSTALLOGRAPHY (1.4 ANGSTROMS) OF 515-837</scope>
</reference>